<protein>
    <recommendedName>
        <fullName>Pectinesterase/pectinesterase inhibitor</fullName>
    </recommendedName>
    <domain>
        <recommendedName>
            <fullName>Pectinesterase inhibitor</fullName>
        </recommendedName>
        <alternativeName>
            <fullName>Pectin methylesterase inhibitor</fullName>
        </alternativeName>
    </domain>
    <domain>
        <recommendedName>
            <fullName>Pectinesterase</fullName>
            <shortName>PE</shortName>
            <ecNumber>3.1.1.11</ecNumber>
        </recommendedName>
        <alternativeName>
            <fullName>Pectin methylesterase</fullName>
        </alternativeName>
    </domain>
</protein>
<feature type="chain" id="PRO_0000215044" description="Pectinesterase/pectinesterase inhibitor">
    <location>
        <begin position="1" status="less than"/>
        <end position="571"/>
    </location>
</feature>
<feature type="region of interest" description="Pectinesterase inhibitor">
    <location>
        <begin position="27"/>
        <end position="178"/>
    </location>
</feature>
<feature type="region of interest" description="Disordered" evidence="3">
    <location>
        <begin position="233"/>
        <end position="254"/>
    </location>
</feature>
<feature type="region of interest" description="Pectinesterase">
    <location>
        <begin position="259"/>
        <end position="558"/>
    </location>
</feature>
<feature type="active site" description="Proton donor; for pectinesterase activity" evidence="2">
    <location>
        <position position="389"/>
    </location>
</feature>
<feature type="active site" description="Nucleophile; for pectinesterase activity" evidence="2">
    <location>
        <position position="410"/>
    </location>
</feature>
<feature type="binding site" evidence="1">
    <location>
        <position position="336"/>
    </location>
    <ligand>
        <name>substrate</name>
        <note>for pectinesterase activity</note>
    </ligand>
</feature>
<feature type="binding site" evidence="1">
    <location>
        <position position="366"/>
    </location>
    <ligand>
        <name>substrate</name>
        <note>for pectinesterase activity</note>
    </ligand>
</feature>
<feature type="binding site" evidence="1">
    <location>
        <position position="479"/>
    </location>
    <ligand>
        <name>substrate</name>
        <note>for pectinesterase activity</note>
    </ligand>
</feature>
<feature type="binding site" evidence="1">
    <location>
        <position position="481"/>
    </location>
    <ligand>
        <name>substrate</name>
        <note>for pectinesterase activity</note>
    </ligand>
</feature>
<feature type="site" description="Transition state stabilizer" evidence="1">
    <location>
        <position position="388"/>
    </location>
</feature>
<feature type="non-terminal residue">
    <location>
        <position position="1"/>
    </location>
</feature>
<accession>Q42608</accession>
<name>PME_BRACM</name>
<comment type="function">
    <text evidence="1">Acts in the modification of cell walls via demethylesterification of cell wall pectin.</text>
</comment>
<comment type="catalytic activity">
    <reaction>
        <text>[(1-&gt;4)-alpha-D-galacturonosyl methyl ester](n) + n H2O = [(1-&gt;4)-alpha-D-galacturonosyl](n) + n methanol + n H(+)</text>
        <dbReference type="Rhea" id="RHEA:22380"/>
        <dbReference type="Rhea" id="RHEA-COMP:14570"/>
        <dbReference type="Rhea" id="RHEA-COMP:14573"/>
        <dbReference type="ChEBI" id="CHEBI:15377"/>
        <dbReference type="ChEBI" id="CHEBI:15378"/>
        <dbReference type="ChEBI" id="CHEBI:17790"/>
        <dbReference type="ChEBI" id="CHEBI:140522"/>
        <dbReference type="ChEBI" id="CHEBI:140523"/>
        <dbReference type="EC" id="3.1.1.11"/>
    </reaction>
</comment>
<comment type="pathway">
    <text>Glycan metabolism; pectin degradation; 2-dehydro-3-deoxy-D-gluconate from pectin: step 1/5.</text>
</comment>
<comment type="subcellular location">
    <subcellularLocation>
        <location evidence="4">Secreted</location>
        <location evidence="4">Cell wall</location>
    </subcellularLocation>
</comment>
<comment type="miscellaneous">
    <text>The PMEI region may act as an autoinhibitory domain and prevent untimely PME activity during transport.</text>
</comment>
<comment type="similarity">
    <text evidence="4">In the N-terminal section; belongs to the PMEI family.</text>
</comment>
<comment type="similarity">
    <text evidence="4">In the C-terminal section; belongs to the pectinesterase family.</text>
</comment>
<organism>
    <name type="scientific">Brassica campestris</name>
    <name type="common">Field mustard</name>
    <dbReference type="NCBI Taxonomy" id="3711"/>
    <lineage>
        <taxon>Eukaryota</taxon>
        <taxon>Viridiplantae</taxon>
        <taxon>Streptophyta</taxon>
        <taxon>Embryophyta</taxon>
        <taxon>Tracheophyta</taxon>
        <taxon>Spermatophyta</taxon>
        <taxon>Magnoliopsida</taxon>
        <taxon>eudicotyledons</taxon>
        <taxon>Gunneridae</taxon>
        <taxon>Pentapetalae</taxon>
        <taxon>rosids</taxon>
        <taxon>malvids</taxon>
        <taxon>Brassicales</taxon>
        <taxon>Brassicaceae</taxon>
        <taxon>Brassiceae</taxon>
        <taxon>Brassica</taxon>
    </lineage>
</organism>
<reference key="1">
    <citation type="submission" date="1996-07" db="EMBL/GenBank/DDBJ databases">
        <authorList>
            <person name="Kim H.U."/>
            <person name="Park B.S."/>
            <person name="Lee J.Y."/>
            <person name="Jin Y.M."/>
            <person name="Chung T.Y."/>
            <person name="Kang S.K."/>
        </authorList>
    </citation>
    <scope>NUCLEOTIDE SEQUENCE [MRNA]</scope>
    <source>
        <tissue>Anther</tissue>
    </source>
</reference>
<evidence type="ECO:0000250" key="1"/>
<evidence type="ECO:0000255" key="2">
    <source>
        <dbReference type="PROSITE-ProRule" id="PRU10040"/>
    </source>
</evidence>
<evidence type="ECO:0000256" key="3">
    <source>
        <dbReference type="SAM" id="MobiDB-lite"/>
    </source>
</evidence>
<evidence type="ECO:0000305" key="4"/>
<proteinExistence type="evidence at transcript level"/>
<sequence>LLVVGVAIGVVTFVNKGGGAGGDKTLNSHQKAVESLCASATDKGSCAKTLDPVKSDDPSKLIKAFMLATKDAVTKSTNFTASTEEGMGKNMNATSKAVLDYCKRVLMYALEDLETIVEEMGEDLQQSGSKMDQLKQWLTGVFNYQTDCIDDIEESELRKVMGEGIRHSKILSSNAIDIFHALTTAMSQMNVKVDDMKKGNLGETPAPDRDLLEDLDQKGLPKWHSDKDRKLMAQAGRPGAPADEGIGEGGGGGGKIKPTHVVAKDGSGQFKTISEAVKACPEKNPGRCIIYIKAGVYKEQVTIPKKVNNVFMFGDGATQTIITFDRSVGLSPGTTTSLSGTVQVESEGFMAKWIGFQNTAGPLGNQAVAFRVNGDRAVIFNCRFDGYQDTLYVNNGRQFYRNIVVSGTVDFINGKSATVIQNSLILCRKGSPGQTNHVTADGKQKGKAVKIGIVLHNCRIMADKELEADRLTVKSYLGRPWKPFATTAVIGTEIGDLIQPTGWNEWQGEKFHLTATYVEFNNRGPGANPAARVPWAKMAKSAAEVERFTVANWLTPANWIQEANVTVQLGL</sequence>
<dbReference type="EC" id="3.1.1.11"/>
<dbReference type="EMBL" id="L48178">
    <property type="protein sequence ID" value="AAB04617.1"/>
    <property type="molecule type" value="mRNA"/>
</dbReference>
<dbReference type="PIR" id="T52325">
    <property type="entry name" value="T52325"/>
</dbReference>
<dbReference type="SMR" id="Q42608"/>
<dbReference type="UniPathway" id="UPA00545">
    <property type="reaction ID" value="UER00823"/>
</dbReference>
<dbReference type="Proteomes" id="UP000011750">
    <property type="component" value="Unplaced"/>
</dbReference>
<dbReference type="GO" id="GO:0005576">
    <property type="term" value="C:extracellular region"/>
    <property type="evidence" value="ECO:0007669"/>
    <property type="project" value="UniProtKB-KW"/>
</dbReference>
<dbReference type="GO" id="GO:0030599">
    <property type="term" value="F:pectinesterase activity"/>
    <property type="evidence" value="ECO:0000318"/>
    <property type="project" value="GO_Central"/>
</dbReference>
<dbReference type="GO" id="GO:0046910">
    <property type="term" value="F:pectinesterase inhibitor activity"/>
    <property type="evidence" value="ECO:0000318"/>
    <property type="project" value="GO_Central"/>
</dbReference>
<dbReference type="GO" id="GO:0042545">
    <property type="term" value="P:cell wall modification"/>
    <property type="evidence" value="ECO:0007669"/>
    <property type="project" value="InterPro"/>
</dbReference>
<dbReference type="GO" id="GO:0045490">
    <property type="term" value="P:pectin catabolic process"/>
    <property type="evidence" value="ECO:0007669"/>
    <property type="project" value="UniProtKB-UniPathway"/>
</dbReference>
<dbReference type="CDD" id="cd15798">
    <property type="entry name" value="PMEI-like_3"/>
    <property type="match status" value="1"/>
</dbReference>
<dbReference type="FunFam" id="1.20.140.40:FF:000016">
    <property type="entry name" value="Pectinesterase"/>
    <property type="match status" value="1"/>
</dbReference>
<dbReference type="FunFam" id="2.160.20.10:FF:000029">
    <property type="entry name" value="Pectinesterase 4"/>
    <property type="match status" value="1"/>
</dbReference>
<dbReference type="Gene3D" id="1.20.140.40">
    <property type="entry name" value="Invertase/pectin methylesterase inhibitor family protein"/>
    <property type="match status" value="1"/>
</dbReference>
<dbReference type="Gene3D" id="2.160.20.10">
    <property type="entry name" value="Single-stranded right-handed beta-helix, Pectin lyase-like"/>
    <property type="match status" value="1"/>
</dbReference>
<dbReference type="InterPro" id="IPR035513">
    <property type="entry name" value="Invertase/methylesterase_inhib"/>
</dbReference>
<dbReference type="InterPro" id="IPR012334">
    <property type="entry name" value="Pectin_lyas_fold"/>
</dbReference>
<dbReference type="InterPro" id="IPR011050">
    <property type="entry name" value="Pectin_lyase_fold/virulence"/>
</dbReference>
<dbReference type="InterPro" id="IPR033131">
    <property type="entry name" value="Pectinesterase_Asp_AS"/>
</dbReference>
<dbReference type="InterPro" id="IPR000070">
    <property type="entry name" value="Pectinesterase_cat"/>
</dbReference>
<dbReference type="InterPro" id="IPR006501">
    <property type="entry name" value="Pectinesterase_inhib_dom"/>
</dbReference>
<dbReference type="InterPro" id="IPR018040">
    <property type="entry name" value="Pectinesterase_Tyr_AS"/>
</dbReference>
<dbReference type="NCBIfam" id="TIGR01614">
    <property type="entry name" value="PME_inhib"/>
    <property type="match status" value="1"/>
</dbReference>
<dbReference type="PANTHER" id="PTHR31707">
    <property type="entry name" value="PECTINESTERASE"/>
    <property type="match status" value="1"/>
</dbReference>
<dbReference type="Pfam" id="PF01095">
    <property type="entry name" value="Pectinesterase"/>
    <property type="match status" value="1"/>
</dbReference>
<dbReference type="Pfam" id="PF04043">
    <property type="entry name" value="PMEI"/>
    <property type="match status" value="1"/>
</dbReference>
<dbReference type="SMART" id="SM00856">
    <property type="entry name" value="PMEI"/>
    <property type="match status" value="1"/>
</dbReference>
<dbReference type="SUPFAM" id="SSF51126">
    <property type="entry name" value="Pectin lyase-like"/>
    <property type="match status" value="1"/>
</dbReference>
<dbReference type="SUPFAM" id="SSF101148">
    <property type="entry name" value="Plant invertase/pectin methylesterase inhibitor"/>
    <property type="match status" value="1"/>
</dbReference>
<dbReference type="PROSITE" id="PS00800">
    <property type="entry name" value="PECTINESTERASE_1"/>
    <property type="match status" value="1"/>
</dbReference>
<dbReference type="PROSITE" id="PS00503">
    <property type="entry name" value="PECTINESTERASE_2"/>
    <property type="match status" value="1"/>
</dbReference>
<keyword id="KW-0063">Aspartyl esterase</keyword>
<keyword id="KW-0134">Cell wall</keyword>
<keyword id="KW-0961">Cell wall biogenesis/degradation</keyword>
<keyword id="KW-0378">Hydrolase</keyword>
<keyword id="KW-1185">Reference proteome</keyword>
<keyword id="KW-0964">Secreted</keyword>